<sequence>MRHYEIMIILDPAQDERTVAPSLDKYLDVVRKEKGNVDKVDIWGKRRLAYPIQKKEEGIYVVVDFTCESATVLEVDRLLNLNDSVLRTKVLRTDA</sequence>
<evidence type="ECO:0000255" key="1">
    <source>
        <dbReference type="HAMAP-Rule" id="MF_00360"/>
    </source>
</evidence>
<evidence type="ECO:0000305" key="2"/>
<comment type="function">
    <text evidence="1">Binds together with bS18 to 16S ribosomal RNA.</text>
</comment>
<comment type="similarity">
    <text evidence="1">Belongs to the bacterial ribosomal protein bS6 family.</text>
</comment>
<organism>
    <name type="scientific">Corynebacterium kroppenstedtii (strain DSM 44385 / JCM 11950 / CIP 105744 / CCUG 35717)</name>
    <dbReference type="NCBI Taxonomy" id="645127"/>
    <lineage>
        <taxon>Bacteria</taxon>
        <taxon>Bacillati</taxon>
        <taxon>Actinomycetota</taxon>
        <taxon>Actinomycetes</taxon>
        <taxon>Mycobacteriales</taxon>
        <taxon>Corynebacteriaceae</taxon>
        <taxon>Corynebacterium</taxon>
    </lineage>
</organism>
<accession>C4LGG1</accession>
<gene>
    <name evidence="1" type="primary">rpsF</name>
    <name type="ordered locus">ckrop_2082</name>
</gene>
<proteinExistence type="inferred from homology"/>
<reference key="1">
    <citation type="journal article" date="2008" name="J. Biotechnol.">
        <title>Ultrafast pyrosequencing of Corynebacterium kroppenstedtii DSM44385 revealed insights into the physiology of a lipophilic corynebacterium that lacks mycolic acids.</title>
        <authorList>
            <person name="Tauch A."/>
            <person name="Schneider J."/>
            <person name="Szczepanowski R."/>
            <person name="Tilker A."/>
            <person name="Viehoever P."/>
            <person name="Gartemann K.-H."/>
            <person name="Arnold W."/>
            <person name="Blom J."/>
            <person name="Brinkrolf K."/>
            <person name="Brune I."/>
            <person name="Goetker S."/>
            <person name="Weisshaar B."/>
            <person name="Goesmann A."/>
            <person name="Droege M."/>
            <person name="Puehler A."/>
        </authorList>
    </citation>
    <scope>NUCLEOTIDE SEQUENCE [LARGE SCALE GENOMIC DNA]</scope>
    <source>
        <strain>DSM 44385 / JCM 11950 / CIP 105744 / CCUG 35717</strain>
    </source>
</reference>
<name>RS6_CORK4</name>
<dbReference type="EMBL" id="CP001620">
    <property type="protein sequence ID" value="ACR18780.1"/>
    <property type="molecule type" value="Genomic_DNA"/>
</dbReference>
<dbReference type="SMR" id="C4LGG1"/>
<dbReference type="STRING" id="645127.ckrop_2082"/>
<dbReference type="KEGG" id="ckp:ckrop_2082"/>
<dbReference type="eggNOG" id="COG0360">
    <property type="taxonomic scope" value="Bacteria"/>
</dbReference>
<dbReference type="HOGENOM" id="CLU_113441_5_3_11"/>
<dbReference type="Proteomes" id="UP000001473">
    <property type="component" value="Chromosome"/>
</dbReference>
<dbReference type="GO" id="GO:0005737">
    <property type="term" value="C:cytoplasm"/>
    <property type="evidence" value="ECO:0007669"/>
    <property type="project" value="UniProtKB-ARBA"/>
</dbReference>
<dbReference type="GO" id="GO:1990904">
    <property type="term" value="C:ribonucleoprotein complex"/>
    <property type="evidence" value="ECO:0007669"/>
    <property type="project" value="UniProtKB-KW"/>
</dbReference>
<dbReference type="GO" id="GO:0005840">
    <property type="term" value="C:ribosome"/>
    <property type="evidence" value="ECO:0007669"/>
    <property type="project" value="UniProtKB-KW"/>
</dbReference>
<dbReference type="GO" id="GO:0070181">
    <property type="term" value="F:small ribosomal subunit rRNA binding"/>
    <property type="evidence" value="ECO:0007669"/>
    <property type="project" value="TreeGrafter"/>
</dbReference>
<dbReference type="GO" id="GO:0003735">
    <property type="term" value="F:structural constituent of ribosome"/>
    <property type="evidence" value="ECO:0007669"/>
    <property type="project" value="InterPro"/>
</dbReference>
<dbReference type="GO" id="GO:0006412">
    <property type="term" value="P:translation"/>
    <property type="evidence" value="ECO:0007669"/>
    <property type="project" value="UniProtKB-UniRule"/>
</dbReference>
<dbReference type="CDD" id="cd00473">
    <property type="entry name" value="bS6"/>
    <property type="match status" value="1"/>
</dbReference>
<dbReference type="FunFam" id="3.30.70.60:FF:000002">
    <property type="entry name" value="30S ribosomal protein S6"/>
    <property type="match status" value="1"/>
</dbReference>
<dbReference type="Gene3D" id="3.30.70.60">
    <property type="match status" value="1"/>
</dbReference>
<dbReference type="HAMAP" id="MF_00360">
    <property type="entry name" value="Ribosomal_bS6"/>
    <property type="match status" value="1"/>
</dbReference>
<dbReference type="InterPro" id="IPR000529">
    <property type="entry name" value="Ribosomal_bS6"/>
</dbReference>
<dbReference type="InterPro" id="IPR035980">
    <property type="entry name" value="Ribosomal_bS6_sf"/>
</dbReference>
<dbReference type="InterPro" id="IPR020814">
    <property type="entry name" value="Ribosomal_S6_plastid/chlpt"/>
</dbReference>
<dbReference type="InterPro" id="IPR014717">
    <property type="entry name" value="Transl_elong_EF1B/ribsomal_bS6"/>
</dbReference>
<dbReference type="NCBIfam" id="TIGR00166">
    <property type="entry name" value="S6"/>
    <property type="match status" value="1"/>
</dbReference>
<dbReference type="PANTHER" id="PTHR21011">
    <property type="entry name" value="MITOCHONDRIAL 28S RIBOSOMAL PROTEIN S6"/>
    <property type="match status" value="1"/>
</dbReference>
<dbReference type="PANTHER" id="PTHR21011:SF1">
    <property type="entry name" value="SMALL RIBOSOMAL SUBUNIT PROTEIN BS6M"/>
    <property type="match status" value="1"/>
</dbReference>
<dbReference type="Pfam" id="PF01250">
    <property type="entry name" value="Ribosomal_S6"/>
    <property type="match status" value="1"/>
</dbReference>
<dbReference type="SUPFAM" id="SSF54995">
    <property type="entry name" value="Ribosomal protein S6"/>
    <property type="match status" value="1"/>
</dbReference>
<keyword id="KW-1185">Reference proteome</keyword>
<keyword id="KW-0687">Ribonucleoprotein</keyword>
<keyword id="KW-0689">Ribosomal protein</keyword>
<keyword id="KW-0694">RNA-binding</keyword>
<keyword id="KW-0699">rRNA-binding</keyword>
<feature type="chain" id="PRO_1000205391" description="Small ribosomal subunit protein bS6">
    <location>
        <begin position="1"/>
        <end position="95"/>
    </location>
</feature>
<protein>
    <recommendedName>
        <fullName evidence="1">Small ribosomal subunit protein bS6</fullName>
    </recommendedName>
    <alternativeName>
        <fullName evidence="2">30S ribosomal protein S6</fullName>
    </alternativeName>
</protein>